<dbReference type="EC" id="2.7.1.23" evidence="1"/>
<dbReference type="EMBL" id="CR555306">
    <property type="protein sequence ID" value="CAI08845.1"/>
    <property type="molecule type" value="Genomic_DNA"/>
</dbReference>
<dbReference type="SMR" id="Q5P1G9"/>
<dbReference type="STRING" id="76114.ebA4805"/>
<dbReference type="KEGG" id="eba:ebA4805"/>
<dbReference type="eggNOG" id="COG0061">
    <property type="taxonomic scope" value="Bacteria"/>
</dbReference>
<dbReference type="HOGENOM" id="CLU_008831_0_1_4"/>
<dbReference type="Proteomes" id="UP000006552">
    <property type="component" value="Chromosome"/>
</dbReference>
<dbReference type="GO" id="GO:0005737">
    <property type="term" value="C:cytoplasm"/>
    <property type="evidence" value="ECO:0007669"/>
    <property type="project" value="UniProtKB-SubCell"/>
</dbReference>
<dbReference type="GO" id="GO:0005524">
    <property type="term" value="F:ATP binding"/>
    <property type="evidence" value="ECO:0007669"/>
    <property type="project" value="UniProtKB-KW"/>
</dbReference>
<dbReference type="GO" id="GO:0046872">
    <property type="term" value="F:metal ion binding"/>
    <property type="evidence" value="ECO:0007669"/>
    <property type="project" value="UniProtKB-UniRule"/>
</dbReference>
<dbReference type="GO" id="GO:0051287">
    <property type="term" value="F:NAD binding"/>
    <property type="evidence" value="ECO:0007669"/>
    <property type="project" value="UniProtKB-ARBA"/>
</dbReference>
<dbReference type="GO" id="GO:0003951">
    <property type="term" value="F:NAD+ kinase activity"/>
    <property type="evidence" value="ECO:0007669"/>
    <property type="project" value="UniProtKB-UniRule"/>
</dbReference>
<dbReference type="GO" id="GO:0019674">
    <property type="term" value="P:NAD metabolic process"/>
    <property type="evidence" value="ECO:0007669"/>
    <property type="project" value="InterPro"/>
</dbReference>
<dbReference type="GO" id="GO:0006741">
    <property type="term" value="P:NADP biosynthetic process"/>
    <property type="evidence" value="ECO:0007669"/>
    <property type="project" value="UniProtKB-UniRule"/>
</dbReference>
<dbReference type="Gene3D" id="3.40.50.10330">
    <property type="entry name" value="Probable inorganic polyphosphate/atp-NAD kinase, domain 1"/>
    <property type="match status" value="1"/>
</dbReference>
<dbReference type="Gene3D" id="2.60.200.30">
    <property type="entry name" value="Probable inorganic polyphosphate/atp-NAD kinase, domain 2"/>
    <property type="match status" value="1"/>
</dbReference>
<dbReference type="HAMAP" id="MF_00361">
    <property type="entry name" value="NAD_kinase"/>
    <property type="match status" value="1"/>
</dbReference>
<dbReference type="InterPro" id="IPR017438">
    <property type="entry name" value="ATP-NAD_kinase_N"/>
</dbReference>
<dbReference type="InterPro" id="IPR017437">
    <property type="entry name" value="ATP-NAD_kinase_PpnK-typ_C"/>
</dbReference>
<dbReference type="InterPro" id="IPR016064">
    <property type="entry name" value="NAD/diacylglycerol_kinase_sf"/>
</dbReference>
<dbReference type="InterPro" id="IPR002504">
    <property type="entry name" value="NADK"/>
</dbReference>
<dbReference type="NCBIfam" id="NF002306">
    <property type="entry name" value="PRK01231.1"/>
    <property type="match status" value="1"/>
</dbReference>
<dbReference type="NCBIfam" id="NF002561">
    <property type="entry name" value="PRK02155.1"/>
    <property type="match status" value="1"/>
</dbReference>
<dbReference type="PANTHER" id="PTHR20275">
    <property type="entry name" value="NAD KINASE"/>
    <property type="match status" value="1"/>
</dbReference>
<dbReference type="PANTHER" id="PTHR20275:SF0">
    <property type="entry name" value="NAD KINASE"/>
    <property type="match status" value="1"/>
</dbReference>
<dbReference type="Pfam" id="PF01513">
    <property type="entry name" value="NAD_kinase"/>
    <property type="match status" value="1"/>
</dbReference>
<dbReference type="Pfam" id="PF20143">
    <property type="entry name" value="NAD_kinase_C"/>
    <property type="match status" value="1"/>
</dbReference>
<dbReference type="SUPFAM" id="SSF111331">
    <property type="entry name" value="NAD kinase/diacylglycerol kinase-like"/>
    <property type="match status" value="1"/>
</dbReference>
<gene>
    <name evidence="1" type="primary">nadK</name>
    <name type="ordered locus">AZOSEA27200</name>
    <name type="ORF">ebA4805</name>
</gene>
<proteinExistence type="inferred from homology"/>
<organism>
    <name type="scientific">Aromatoleum aromaticum (strain DSM 19018 / LMG 30748 / EbN1)</name>
    <name type="common">Azoarcus sp. (strain EbN1)</name>
    <dbReference type="NCBI Taxonomy" id="76114"/>
    <lineage>
        <taxon>Bacteria</taxon>
        <taxon>Pseudomonadati</taxon>
        <taxon>Pseudomonadota</taxon>
        <taxon>Betaproteobacteria</taxon>
        <taxon>Rhodocyclales</taxon>
        <taxon>Rhodocyclaceae</taxon>
        <taxon>Aromatoleum</taxon>
    </lineage>
</organism>
<protein>
    <recommendedName>
        <fullName evidence="1">NAD kinase</fullName>
        <ecNumber evidence="1">2.7.1.23</ecNumber>
    </recommendedName>
    <alternativeName>
        <fullName evidence="1">ATP-dependent NAD kinase</fullName>
    </alternativeName>
</protein>
<accession>Q5P1G9</accession>
<evidence type="ECO:0000255" key="1">
    <source>
        <dbReference type="HAMAP-Rule" id="MF_00361"/>
    </source>
</evidence>
<name>NADK_AROAE</name>
<comment type="function">
    <text evidence="1">Involved in the regulation of the intracellular balance of NAD and NADP, and is a key enzyme in the biosynthesis of NADP. Catalyzes specifically the phosphorylation on 2'-hydroxyl of the adenosine moiety of NAD to yield NADP.</text>
</comment>
<comment type="catalytic activity">
    <reaction evidence="1">
        <text>NAD(+) + ATP = ADP + NADP(+) + H(+)</text>
        <dbReference type="Rhea" id="RHEA:18629"/>
        <dbReference type="ChEBI" id="CHEBI:15378"/>
        <dbReference type="ChEBI" id="CHEBI:30616"/>
        <dbReference type="ChEBI" id="CHEBI:57540"/>
        <dbReference type="ChEBI" id="CHEBI:58349"/>
        <dbReference type="ChEBI" id="CHEBI:456216"/>
        <dbReference type="EC" id="2.7.1.23"/>
    </reaction>
</comment>
<comment type="cofactor">
    <cofactor evidence="1">
        <name>a divalent metal cation</name>
        <dbReference type="ChEBI" id="CHEBI:60240"/>
    </cofactor>
</comment>
<comment type="subcellular location">
    <subcellularLocation>
        <location evidence="1">Cytoplasm</location>
    </subcellularLocation>
</comment>
<comment type="similarity">
    <text evidence="1">Belongs to the NAD kinase family.</text>
</comment>
<reference key="1">
    <citation type="journal article" date="2005" name="Arch. Microbiol.">
        <title>The genome sequence of an anaerobic aromatic-degrading denitrifying bacterium, strain EbN1.</title>
        <authorList>
            <person name="Rabus R."/>
            <person name="Kube M."/>
            <person name="Heider J."/>
            <person name="Beck A."/>
            <person name="Heitmann K."/>
            <person name="Widdel F."/>
            <person name="Reinhardt R."/>
        </authorList>
    </citation>
    <scope>NUCLEOTIDE SEQUENCE [LARGE SCALE GENOMIC DNA]</scope>
    <source>
        <strain>DSM 19018 / LMG 30748 / EbN1</strain>
    </source>
</reference>
<feature type="chain" id="PRO_0000229598" description="NAD kinase">
    <location>
        <begin position="1"/>
        <end position="300"/>
    </location>
</feature>
<feature type="active site" description="Proton acceptor" evidence="1">
    <location>
        <position position="80"/>
    </location>
</feature>
<feature type="binding site" evidence="1">
    <location>
        <begin position="80"/>
        <end position="81"/>
    </location>
    <ligand>
        <name>NAD(+)</name>
        <dbReference type="ChEBI" id="CHEBI:57540"/>
    </ligand>
</feature>
<feature type="binding site" evidence="1">
    <location>
        <begin position="154"/>
        <end position="155"/>
    </location>
    <ligand>
        <name>NAD(+)</name>
        <dbReference type="ChEBI" id="CHEBI:57540"/>
    </ligand>
</feature>
<feature type="binding site" evidence="1">
    <location>
        <position position="165"/>
    </location>
    <ligand>
        <name>NAD(+)</name>
        <dbReference type="ChEBI" id="CHEBI:57540"/>
    </ligand>
</feature>
<feature type="binding site" evidence="1">
    <location>
        <position position="182"/>
    </location>
    <ligand>
        <name>NAD(+)</name>
        <dbReference type="ChEBI" id="CHEBI:57540"/>
    </ligand>
</feature>
<feature type="binding site" evidence="1">
    <location>
        <position position="184"/>
    </location>
    <ligand>
        <name>NAD(+)</name>
        <dbReference type="ChEBI" id="CHEBI:57540"/>
    </ligand>
</feature>
<feature type="binding site" evidence="1">
    <location>
        <begin position="195"/>
        <end position="200"/>
    </location>
    <ligand>
        <name>NAD(+)</name>
        <dbReference type="ChEBI" id="CHEBI:57540"/>
    </ligand>
</feature>
<feature type="binding site" evidence="1">
    <location>
        <position position="253"/>
    </location>
    <ligand>
        <name>NAD(+)</name>
        <dbReference type="ChEBI" id="CHEBI:57540"/>
    </ligand>
</feature>
<sequence>MWFNPRMSKNFRVVALIGKYQSPEVAEAVLRIAEFLRVRGLDVWIEQGTASSIGMAGQFAVASYEEIGAQADLAVVLGGDGTMLNTARRLSQHGVPLVGINQGRLGFLTDISRDEALPKLGEILEGRYTEESRAMLDAEVLRAGHRVFQTLALNDVVINKGDLGRMIEFDLSIDGEFVYTQRSDGMILATPTGSTAYALSANGPILHPNVGGIALVPLCPHALTARPVTLPDTSHIEIVLLPQHDARIHFDGQARFDARAGDRLRVTRSPDVVRLLHPQGYSYFAMLREKLHWSATPRRP</sequence>
<keyword id="KW-0067">ATP-binding</keyword>
<keyword id="KW-0963">Cytoplasm</keyword>
<keyword id="KW-0418">Kinase</keyword>
<keyword id="KW-0520">NAD</keyword>
<keyword id="KW-0521">NADP</keyword>
<keyword id="KW-0547">Nucleotide-binding</keyword>
<keyword id="KW-1185">Reference proteome</keyword>
<keyword id="KW-0808">Transferase</keyword>